<name>MNHB2_STAA2</name>
<feature type="chain" id="PRO_0000372269" description="Putative antiporter subunit mnhB2">
    <location>
        <begin position="1"/>
        <end position="141"/>
    </location>
</feature>
<feature type="transmembrane region" description="Helical" evidence="2">
    <location>
        <begin position="10"/>
        <end position="30"/>
    </location>
</feature>
<feature type="transmembrane region" description="Helical" evidence="2">
    <location>
        <begin position="35"/>
        <end position="55"/>
    </location>
</feature>
<feature type="transmembrane region" description="Helical" evidence="2">
    <location>
        <begin position="70"/>
        <end position="90"/>
    </location>
</feature>
<feature type="transmembrane region" description="Helical" evidence="2">
    <location>
        <begin position="114"/>
        <end position="134"/>
    </location>
</feature>
<dbReference type="EMBL" id="CP000736">
    <property type="protein sequence ID" value="ABR51518.1"/>
    <property type="molecule type" value="Genomic_DNA"/>
</dbReference>
<dbReference type="SMR" id="A6TZA0"/>
<dbReference type="KEGG" id="sah:SaurJH1_0661"/>
<dbReference type="HOGENOM" id="CLU_101659_1_1_9"/>
<dbReference type="GO" id="GO:0005886">
    <property type="term" value="C:plasma membrane"/>
    <property type="evidence" value="ECO:0007669"/>
    <property type="project" value="UniProtKB-SubCell"/>
</dbReference>
<dbReference type="GO" id="GO:0015297">
    <property type="term" value="F:antiporter activity"/>
    <property type="evidence" value="ECO:0007669"/>
    <property type="project" value="UniProtKB-KW"/>
</dbReference>
<dbReference type="GO" id="GO:0006811">
    <property type="term" value="P:monoatomic ion transport"/>
    <property type="evidence" value="ECO:0007669"/>
    <property type="project" value="UniProtKB-KW"/>
</dbReference>
<dbReference type="InterPro" id="IPR050622">
    <property type="entry name" value="CPA3_antiporter_subunitB"/>
</dbReference>
<dbReference type="InterPro" id="IPR007182">
    <property type="entry name" value="MnhB"/>
</dbReference>
<dbReference type="NCBIfam" id="NF009223">
    <property type="entry name" value="PRK12573.1"/>
    <property type="match status" value="1"/>
</dbReference>
<dbReference type="NCBIfam" id="NF009224">
    <property type="entry name" value="PRK12574.1"/>
    <property type="match status" value="1"/>
</dbReference>
<dbReference type="PANTHER" id="PTHR33932">
    <property type="entry name" value="NA(+)/H(+) ANTIPORTER SUBUNIT B"/>
    <property type="match status" value="1"/>
</dbReference>
<dbReference type="PANTHER" id="PTHR33932:SF4">
    <property type="entry name" value="NA(+)_H(+) ANTIPORTER SUBUNIT B"/>
    <property type="match status" value="1"/>
</dbReference>
<dbReference type="Pfam" id="PF04039">
    <property type="entry name" value="MnhB"/>
    <property type="match status" value="1"/>
</dbReference>
<keyword id="KW-0050">Antiport</keyword>
<keyword id="KW-1003">Cell membrane</keyword>
<keyword id="KW-0406">Ion transport</keyword>
<keyword id="KW-0472">Membrane</keyword>
<keyword id="KW-0812">Transmembrane</keyword>
<keyword id="KW-1133">Transmembrane helix</keyword>
<keyword id="KW-0813">Transport</keyword>
<sequence length="141" mass="15455">MKENDVVLRTVTKLVVFILLTFGFYVFFAGHNNPGGGFIGGLIFSSAFILMFLAFNVEEVLESLPIDFRILMIIGALVSSITAIIPMFFGKPFLSQYETTWILPILGQIHVSTITLFELGILFSVVGVIVTVMLSLSGGRS</sequence>
<evidence type="ECO:0000250" key="1"/>
<evidence type="ECO:0000255" key="2"/>
<evidence type="ECO:0000305" key="3"/>
<organism>
    <name type="scientific">Staphylococcus aureus (strain JH1)</name>
    <dbReference type="NCBI Taxonomy" id="359787"/>
    <lineage>
        <taxon>Bacteria</taxon>
        <taxon>Bacillati</taxon>
        <taxon>Bacillota</taxon>
        <taxon>Bacilli</taxon>
        <taxon>Bacillales</taxon>
        <taxon>Staphylococcaceae</taxon>
        <taxon>Staphylococcus</taxon>
    </lineage>
</organism>
<gene>
    <name type="primary">mnhB2</name>
    <name type="synonym">mrpB2</name>
    <name type="ordered locus">SaurJH1_0661</name>
</gene>
<reference key="1">
    <citation type="submission" date="2007-06" db="EMBL/GenBank/DDBJ databases">
        <title>Complete sequence of chromosome of Staphylococcus aureus subsp. aureus JH1.</title>
        <authorList>
            <consortium name="US DOE Joint Genome Institute"/>
            <person name="Copeland A."/>
            <person name="Lucas S."/>
            <person name="Lapidus A."/>
            <person name="Barry K."/>
            <person name="Detter J.C."/>
            <person name="Glavina del Rio T."/>
            <person name="Hammon N."/>
            <person name="Israni S."/>
            <person name="Dalin E."/>
            <person name="Tice H."/>
            <person name="Pitluck S."/>
            <person name="Chain P."/>
            <person name="Malfatti S."/>
            <person name="Shin M."/>
            <person name="Vergez L."/>
            <person name="Schmutz J."/>
            <person name="Larimer F."/>
            <person name="Land M."/>
            <person name="Hauser L."/>
            <person name="Kyrpides N."/>
            <person name="Ivanova N."/>
            <person name="Tomasz A."/>
            <person name="Richardson P."/>
        </authorList>
    </citation>
    <scope>NUCLEOTIDE SEQUENCE [LARGE SCALE GENOMIC DNA]</scope>
    <source>
        <strain>JH1</strain>
    </source>
</reference>
<comment type="subunit">
    <text evidence="1">May form a heterooligomeric complex that consists of seven subunits: mnhA2, mnhB2, mnhC2, mnhD2, mnhE2, mnhF2 and mnhG2.</text>
</comment>
<comment type="subcellular location">
    <subcellularLocation>
        <location evidence="3">Cell membrane</location>
        <topology evidence="3">Multi-pass membrane protein</topology>
    </subcellularLocation>
</comment>
<comment type="similarity">
    <text evidence="3">Belongs to the CPA3 antiporters (TC 2.A.63) subunit B family.</text>
</comment>
<proteinExistence type="inferred from homology"/>
<protein>
    <recommendedName>
        <fullName>Putative antiporter subunit mnhB2</fullName>
    </recommendedName>
    <alternativeName>
        <fullName>Mrp complex subunit B2</fullName>
    </alternativeName>
    <alternativeName>
        <fullName>Putative NADH-ubiquinone oxidoreductase subunit mnhB2</fullName>
    </alternativeName>
</protein>
<accession>A6TZA0</accession>